<gene>
    <name evidence="1" type="primary">fbp</name>
    <name type="ordered locus">sce2578</name>
</gene>
<keyword id="KW-0119">Carbohydrate metabolism</keyword>
<keyword id="KW-0963">Cytoplasm</keyword>
<keyword id="KW-0378">Hydrolase</keyword>
<keyword id="KW-0460">Magnesium</keyword>
<keyword id="KW-0479">Metal-binding</keyword>
<keyword id="KW-1185">Reference proteome</keyword>
<accession>A9G6T8</accession>
<protein>
    <recommendedName>
        <fullName evidence="1">Fructose-1,6-bisphosphatase class 1</fullName>
        <shortName evidence="1">FBPase class 1</shortName>
        <ecNumber evidence="1">3.1.3.11</ecNumber>
    </recommendedName>
    <alternativeName>
        <fullName evidence="1">D-fructose-1,6-bisphosphate 1-phosphohydrolase class 1</fullName>
    </alternativeName>
</protein>
<sequence length="347" mass="37762">MSDQRDLSWKPPDAPSRIGITLETYILEGMLGFPAATGAFTSLLNQLGLVAKLVTSKVRRAGLANVLGYTGQTNVQGEVVQKLDEVANETLLSVLGRRGHCAAVVSEELGEMRLLSTDPRAKYIVVVDPLDGSSNIDVNISIGTIFGVLRKSDAKMGADPSDFLRPGRDLVAAGYVLYGSSTLLVITTGLGGVHGFTYDPTVGEFFLSHENIRIPERGSTYSINEGHSARWPEDVRRWNAWIKEDSKPEGRPYGARYVGSLVADAHRTLLKGGIFAYPADRSGQGKLRLLYEASPFAFIFEAAGGKASTGAERILDRVPRSLHERVPLVLGSPRDVEDFEQFVRGER</sequence>
<reference key="1">
    <citation type="journal article" date="2007" name="Nat. Biotechnol.">
        <title>Complete genome sequence of the myxobacterium Sorangium cellulosum.</title>
        <authorList>
            <person name="Schneiker S."/>
            <person name="Perlova O."/>
            <person name="Kaiser O."/>
            <person name="Gerth K."/>
            <person name="Alici A."/>
            <person name="Altmeyer M.O."/>
            <person name="Bartels D."/>
            <person name="Bekel T."/>
            <person name="Beyer S."/>
            <person name="Bode E."/>
            <person name="Bode H.B."/>
            <person name="Bolten C.J."/>
            <person name="Choudhuri J.V."/>
            <person name="Doss S."/>
            <person name="Elnakady Y.A."/>
            <person name="Frank B."/>
            <person name="Gaigalat L."/>
            <person name="Goesmann A."/>
            <person name="Groeger C."/>
            <person name="Gross F."/>
            <person name="Jelsbak L."/>
            <person name="Jelsbak L."/>
            <person name="Kalinowski J."/>
            <person name="Kegler C."/>
            <person name="Knauber T."/>
            <person name="Konietzny S."/>
            <person name="Kopp M."/>
            <person name="Krause L."/>
            <person name="Krug D."/>
            <person name="Linke B."/>
            <person name="Mahmud T."/>
            <person name="Martinez-Arias R."/>
            <person name="McHardy A.C."/>
            <person name="Merai M."/>
            <person name="Meyer F."/>
            <person name="Mormann S."/>
            <person name="Munoz-Dorado J."/>
            <person name="Perez J."/>
            <person name="Pradella S."/>
            <person name="Rachid S."/>
            <person name="Raddatz G."/>
            <person name="Rosenau F."/>
            <person name="Rueckert C."/>
            <person name="Sasse F."/>
            <person name="Scharfe M."/>
            <person name="Schuster S.C."/>
            <person name="Suen G."/>
            <person name="Treuner-Lange A."/>
            <person name="Velicer G.J."/>
            <person name="Vorholter F.-J."/>
            <person name="Weissman K.J."/>
            <person name="Welch R.D."/>
            <person name="Wenzel S.C."/>
            <person name="Whitworth D.E."/>
            <person name="Wilhelm S."/>
            <person name="Wittmann C."/>
            <person name="Bloecker H."/>
            <person name="Puehler A."/>
            <person name="Mueller R."/>
        </authorList>
    </citation>
    <scope>NUCLEOTIDE SEQUENCE [LARGE SCALE GENOMIC DNA]</scope>
    <source>
        <strain>So ce56</strain>
    </source>
</reference>
<feature type="chain" id="PRO_0000364722" description="Fructose-1,6-bisphosphatase class 1">
    <location>
        <begin position="1"/>
        <end position="347"/>
    </location>
</feature>
<feature type="binding site" evidence="1">
    <location>
        <position position="107"/>
    </location>
    <ligand>
        <name>Mg(2+)</name>
        <dbReference type="ChEBI" id="CHEBI:18420"/>
        <label>1</label>
    </ligand>
</feature>
<feature type="binding site" evidence="1">
    <location>
        <position position="128"/>
    </location>
    <ligand>
        <name>Mg(2+)</name>
        <dbReference type="ChEBI" id="CHEBI:18420"/>
        <label>1</label>
    </ligand>
</feature>
<feature type="binding site" evidence="1">
    <location>
        <position position="128"/>
    </location>
    <ligand>
        <name>Mg(2+)</name>
        <dbReference type="ChEBI" id="CHEBI:18420"/>
        <label>2</label>
    </ligand>
</feature>
<feature type="binding site" evidence="1">
    <location>
        <position position="130"/>
    </location>
    <ligand>
        <name>Mg(2+)</name>
        <dbReference type="ChEBI" id="CHEBI:18420"/>
        <label>1</label>
    </ligand>
</feature>
<feature type="binding site" evidence="1">
    <location>
        <begin position="131"/>
        <end position="134"/>
    </location>
    <ligand>
        <name>substrate</name>
    </ligand>
</feature>
<feature type="binding site" evidence="1">
    <location>
        <position position="131"/>
    </location>
    <ligand>
        <name>Mg(2+)</name>
        <dbReference type="ChEBI" id="CHEBI:18420"/>
        <label>2</label>
    </ligand>
</feature>
<feature type="binding site" evidence="1">
    <location>
        <position position="224"/>
    </location>
    <ligand>
        <name>substrate</name>
    </ligand>
</feature>
<feature type="binding site" evidence="1">
    <location>
        <position position="257"/>
    </location>
    <ligand>
        <name>substrate</name>
    </ligand>
</feature>
<feature type="binding site" evidence="1">
    <location>
        <position position="286"/>
    </location>
    <ligand>
        <name>substrate</name>
    </ligand>
</feature>
<feature type="binding site" evidence="1">
    <location>
        <position position="292"/>
    </location>
    <ligand>
        <name>Mg(2+)</name>
        <dbReference type="ChEBI" id="CHEBI:18420"/>
        <label>2</label>
    </ligand>
</feature>
<comment type="catalytic activity">
    <reaction evidence="1">
        <text>beta-D-fructose 1,6-bisphosphate + H2O = beta-D-fructose 6-phosphate + phosphate</text>
        <dbReference type="Rhea" id="RHEA:11064"/>
        <dbReference type="ChEBI" id="CHEBI:15377"/>
        <dbReference type="ChEBI" id="CHEBI:32966"/>
        <dbReference type="ChEBI" id="CHEBI:43474"/>
        <dbReference type="ChEBI" id="CHEBI:57634"/>
        <dbReference type="EC" id="3.1.3.11"/>
    </reaction>
</comment>
<comment type="cofactor">
    <cofactor evidence="1">
        <name>Mg(2+)</name>
        <dbReference type="ChEBI" id="CHEBI:18420"/>
    </cofactor>
    <text evidence="1">Binds 2 magnesium ions per subunit.</text>
</comment>
<comment type="pathway">
    <text evidence="1">Carbohydrate biosynthesis; gluconeogenesis.</text>
</comment>
<comment type="subunit">
    <text evidence="1">Homotetramer.</text>
</comment>
<comment type="subcellular location">
    <subcellularLocation>
        <location evidence="1">Cytoplasm</location>
    </subcellularLocation>
</comment>
<comment type="similarity">
    <text evidence="1">Belongs to the FBPase class 1 family.</text>
</comment>
<evidence type="ECO:0000255" key="1">
    <source>
        <dbReference type="HAMAP-Rule" id="MF_01855"/>
    </source>
</evidence>
<name>F16PA_SORC5</name>
<dbReference type="EC" id="3.1.3.11" evidence="1"/>
<dbReference type="EMBL" id="AM746676">
    <property type="protein sequence ID" value="CAN92737.1"/>
    <property type="molecule type" value="Genomic_DNA"/>
</dbReference>
<dbReference type="RefSeq" id="WP_012235210.1">
    <property type="nucleotide sequence ID" value="NC_010162.1"/>
</dbReference>
<dbReference type="SMR" id="A9G6T8"/>
<dbReference type="STRING" id="448385.sce2578"/>
<dbReference type="KEGG" id="scl:sce2578"/>
<dbReference type="eggNOG" id="COG0158">
    <property type="taxonomic scope" value="Bacteria"/>
</dbReference>
<dbReference type="HOGENOM" id="CLU_039977_2_2_7"/>
<dbReference type="OrthoDB" id="9806756at2"/>
<dbReference type="BioCyc" id="SCEL448385:SCE_RS13205-MONOMER"/>
<dbReference type="UniPathway" id="UPA00138"/>
<dbReference type="Proteomes" id="UP000002139">
    <property type="component" value="Chromosome"/>
</dbReference>
<dbReference type="GO" id="GO:0005829">
    <property type="term" value="C:cytosol"/>
    <property type="evidence" value="ECO:0007669"/>
    <property type="project" value="TreeGrafter"/>
</dbReference>
<dbReference type="GO" id="GO:0042132">
    <property type="term" value="F:fructose 1,6-bisphosphate 1-phosphatase activity"/>
    <property type="evidence" value="ECO:0007669"/>
    <property type="project" value="UniProtKB-UniRule"/>
</dbReference>
<dbReference type="GO" id="GO:0000287">
    <property type="term" value="F:magnesium ion binding"/>
    <property type="evidence" value="ECO:0007669"/>
    <property type="project" value="UniProtKB-UniRule"/>
</dbReference>
<dbReference type="GO" id="GO:0030388">
    <property type="term" value="P:fructose 1,6-bisphosphate metabolic process"/>
    <property type="evidence" value="ECO:0007669"/>
    <property type="project" value="TreeGrafter"/>
</dbReference>
<dbReference type="GO" id="GO:0006002">
    <property type="term" value="P:fructose 6-phosphate metabolic process"/>
    <property type="evidence" value="ECO:0007669"/>
    <property type="project" value="TreeGrafter"/>
</dbReference>
<dbReference type="GO" id="GO:0006000">
    <property type="term" value="P:fructose metabolic process"/>
    <property type="evidence" value="ECO:0007669"/>
    <property type="project" value="TreeGrafter"/>
</dbReference>
<dbReference type="GO" id="GO:0006094">
    <property type="term" value="P:gluconeogenesis"/>
    <property type="evidence" value="ECO:0007669"/>
    <property type="project" value="UniProtKB-UniRule"/>
</dbReference>
<dbReference type="GO" id="GO:0005986">
    <property type="term" value="P:sucrose biosynthetic process"/>
    <property type="evidence" value="ECO:0007669"/>
    <property type="project" value="TreeGrafter"/>
</dbReference>
<dbReference type="CDD" id="cd00354">
    <property type="entry name" value="FBPase"/>
    <property type="match status" value="1"/>
</dbReference>
<dbReference type="FunFam" id="3.30.540.10:FF:000002">
    <property type="entry name" value="Fructose-1,6-bisphosphatase class 1"/>
    <property type="match status" value="1"/>
</dbReference>
<dbReference type="FunFam" id="3.40.190.80:FF:000001">
    <property type="entry name" value="Fructose-1,6-bisphosphatase class 1"/>
    <property type="match status" value="1"/>
</dbReference>
<dbReference type="Gene3D" id="3.40.190.80">
    <property type="match status" value="1"/>
</dbReference>
<dbReference type="Gene3D" id="3.30.540.10">
    <property type="entry name" value="Fructose-1,6-Bisphosphatase, subunit A, domain 1"/>
    <property type="match status" value="1"/>
</dbReference>
<dbReference type="HAMAP" id="MF_01855">
    <property type="entry name" value="FBPase_class1"/>
    <property type="match status" value="1"/>
</dbReference>
<dbReference type="InterPro" id="IPR044015">
    <property type="entry name" value="FBPase_C_dom"/>
</dbReference>
<dbReference type="InterPro" id="IPR000146">
    <property type="entry name" value="FBPase_class-1"/>
</dbReference>
<dbReference type="InterPro" id="IPR033391">
    <property type="entry name" value="FBPase_N"/>
</dbReference>
<dbReference type="InterPro" id="IPR028343">
    <property type="entry name" value="FBPtase"/>
</dbReference>
<dbReference type="NCBIfam" id="NF006778">
    <property type="entry name" value="PRK09293.1-1"/>
    <property type="match status" value="1"/>
</dbReference>
<dbReference type="PANTHER" id="PTHR11556">
    <property type="entry name" value="FRUCTOSE-1,6-BISPHOSPHATASE-RELATED"/>
    <property type="match status" value="1"/>
</dbReference>
<dbReference type="PANTHER" id="PTHR11556:SF35">
    <property type="entry name" value="SEDOHEPTULOSE-1,7-BISPHOSPHATASE, CHLOROPLASTIC"/>
    <property type="match status" value="1"/>
</dbReference>
<dbReference type="Pfam" id="PF00316">
    <property type="entry name" value="FBPase"/>
    <property type="match status" value="1"/>
</dbReference>
<dbReference type="Pfam" id="PF18913">
    <property type="entry name" value="FBPase_C"/>
    <property type="match status" value="1"/>
</dbReference>
<dbReference type="PIRSF" id="PIRSF500210">
    <property type="entry name" value="FBPtase"/>
    <property type="match status" value="1"/>
</dbReference>
<dbReference type="PIRSF" id="PIRSF000904">
    <property type="entry name" value="FBPtase_SBPase"/>
    <property type="match status" value="1"/>
</dbReference>
<dbReference type="PRINTS" id="PR00115">
    <property type="entry name" value="F16BPHPHTASE"/>
</dbReference>
<dbReference type="SUPFAM" id="SSF56655">
    <property type="entry name" value="Carbohydrate phosphatase"/>
    <property type="match status" value="1"/>
</dbReference>
<proteinExistence type="inferred from homology"/>
<organism>
    <name type="scientific">Sorangium cellulosum (strain So ce56)</name>
    <name type="common">Polyangium cellulosum (strain So ce56)</name>
    <dbReference type="NCBI Taxonomy" id="448385"/>
    <lineage>
        <taxon>Bacteria</taxon>
        <taxon>Pseudomonadati</taxon>
        <taxon>Myxococcota</taxon>
        <taxon>Polyangia</taxon>
        <taxon>Polyangiales</taxon>
        <taxon>Polyangiaceae</taxon>
        <taxon>Sorangium</taxon>
    </lineage>
</organism>